<accession>B1AIY7</accession>
<evidence type="ECO:0000255" key="1">
    <source>
        <dbReference type="HAMAP-Rule" id="MF_01973"/>
    </source>
</evidence>
<evidence type="ECO:0000255" key="2">
    <source>
        <dbReference type="PROSITE-ProRule" id="PRU01122"/>
    </source>
</evidence>
<evidence type="ECO:0000255" key="3">
    <source>
        <dbReference type="PROSITE-ProRule" id="PRU01123"/>
    </source>
</evidence>
<organism>
    <name type="scientific">Ureaplasma parvum serovar 3 (strain ATCC 27815 / 27 / NCTC 11736)</name>
    <dbReference type="NCBI Taxonomy" id="505682"/>
    <lineage>
        <taxon>Bacteria</taxon>
        <taxon>Bacillati</taxon>
        <taxon>Mycoplasmatota</taxon>
        <taxon>Mycoplasmoidales</taxon>
        <taxon>Mycoplasmoidaceae</taxon>
        <taxon>Ureaplasma</taxon>
    </lineage>
</organism>
<sequence length="791" mass="89527">MKKPILISRAIVVLPYETTTIEVGRPKSIQAIDLAKQSSSKEIIIISQKDIDTDEVVNFDELYKVGTLVKIKSIIDNFDEGYSIEVEGLKAVYINNENDVIDAIEYEYEDVITNPILSNKDEIAINGINSEIFNIINKRSRHKNINFDNMHALISLEKEKFAYLAAATYINDYDNEISEKTIEDRINILLQPNLLLVHETILHLLFDQLVDKRVIEDEVEKTITDKINNNFQKQQREFYLREKLKVVKEQLGELSSREEDADKIRAKIEDLELPPNVKERALAELNRFENAMSSNESSVIKSYLDWLLDLPWTQQGVDNTDLMSVRTHLDDNHYGIEKVKERILEYLALRMRNPNLKGPIICLVGPPGVGKTSLVTSIAQALNKKFVKVSLGGVRDESEIRGHRKTYVGAMPGRIIKGMKKAGVINPLFLLDEIDKMTSDQRGDPAAAMLEVLDPEQNKNFSDNYIEEEYDLSKVMFMATANYYQQIPYALIDRLEVIELSSYTAIEKREIAKSHLLKRIFMDAKLNENELIFTDDALDFIINHYTKEAGVRELDRQLGHIVRKYIVETYKNKNNQSPLNLKVDEAMIIKYLGKIKFDFNKKEETTIPGIVNGMAYTAAGGDLLPIEVNHSTNGKGGNVTITGNLEKTMNESVSVALGFVKANADKYGIDTKKVSFKEIDIHVHVPSGGIPKDGPSAGIAITTAIISSLSQRPVRTTLSMTGEIMLRGNVGIIGGVKEKVISAYRAGVREIILPIDDERYLEDVPKYILDDIKIHLVKHYDEVYNIVFGEK</sequence>
<reference key="1">
    <citation type="submission" date="2008-02" db="EMBL/GenBank/DDBJ databases">
        <title>Genome sequence of Ureaplasma parvum serovar 3.</title>
        <authorList>
            <person name="Methe B.A."/>
            <person name="Glass J."/>
            <person name="Waites K."/>
            <person name="Shrivastava S."/>
        </authorList>
    </citation>
    <scope>NUCLEOTIDE SEQUENCE [LARGE SCALE GENOMIC DNA]</scope>
    <source>
        <strain>ATCC 27815 / 27 / NCTC 11736</strain>
    </source>
</reference>
<gene>
    <name evidence="1" type="primary">lon</name>
    <name type="ordered locus">UPA3_0364</name>
</gene>
<name>LON_UREP2</name>
<comment type="function">
    <text evidence="1">ATP-dependent serine protease that mediates the selective degradation of mutant and abnormal proteins as well as certain short-lived regulatory proteins. Required for cellular homeostasis and for survival from DNA damage and developmental changes induced by stress. Degrades polypeptides processively to yield small peptide fragments that are 5 to 10 amino acids long. Binds to DNA in a double-stranded, site-specific manner.</text>
</comment>
<comment type="catalytic activity">
    <reaction evidence="1">
        <text>Hydrolysis of proteins in presence of ATP.</text>
        <dbReference type="EC" id="3.4.21.53"/>
    </reaction>
</comment>
<comment type="subunit">
    <text evidence="1">Homohexamer. Organized in a ring with a central cavity.</text>
</comment>
<comment type="subcellular location">
    <subcellularLocation>
        <location evidence="1">Cytoplasm</location>
    </subcellularLocation>
</comment>
<comment type="induction">
    <text evidence="1">By heat shock.</text>
</comment>
<comment type="similarity">
    <text evidence="1">Belongs to the peptidase S16 family.</text>
</comment>
<keyword id="KW-0067">ATP-binding</keyword>
<keyword id="KW-0963">Cytoplasm</keyword>
<keyword id="KW-0378">Hydrolase</keyword>
<keyword id="KW-0547">Nucleotide-binding</keyword>
<keyword id="KW-0645">Protease</keyword>
<keyword id="KW-0720">Serine protease</keyword>
<keyword id="KW-0346">Stress response</keyword>
<protein>
    <recommendedName>
        <fullName evidence="1">Lon protease</fullName>
        <ecNumber evidence="1">3.4.21.53</ecNumber>
    </recommendedName>
    <alternativeName>
        <fullName evidence="1">ATP-dependent protease La</fullName>
    </alternativeName>
</protein>
<feature type="chain" id="PRO_0000396615" description="Lon protease">
    <location>
        <begin position="1"/>
        <end position="791"/>
    </location>
</feature>
<feature type="domain" description="Lon N-terminal" evidence="3">
    <location>
        <begin position="3"/>
        <end position="209"/>
    </location>
</feature>
<feature type="domain" description="Lon proteolytic" evidence="2">
    <location>
        <begin position="605"/>
        <end position="790"/>
    </location>
</feature>
<feature type="active site" evidence="1">
    <location>
        <position position="696"/>
    </location>
</feature>
<feature type="active site" evidence="1">
    <location>
        <position position="739"/>
    </location>
</feature>
<feature type="binding site" evidence="1">
    <location>
        <begin position="365"/>
        <end position="372"/>
    </location>
    <ligand>
        <name>ATP</name>
        <dbReference type="ChEBI" id="CHEBI:30616"/>
    </ligand>
</feature>
<dbReference type="EC" id="3.4.21.53" evidence="1"/>
<dbReference type="EMBL" id="CP000942">
    <property type="protein sequence ID" value="ACA33243.1"/>
    <property type="molecule type" value="Genomic_DNA"/>
</dbReference>
<dbReference type="RefSeq" id="WP_010891739.1">
    <property type="nucleotide sequence ID" value="NC_010503.1"/>
</dbReference>
<dbReference type="SMR" id="B1AIY7"/>
<dbReference type="MEROPS" id="S16.004"/>
<dbReference type="GeneID" id="29672351"/>
<dbReference type="KEGG" id="upa:UPA3_0364"/>
<dbReference type="HOGENOM" id="CLU_004109_4_3_14"/>
<dbReference type="Proteomes" id="UP000002162">
    <property type="component" value="Chromosome"/>
</dbReference>
<dbReference type="GO" id="GO:0005737">
    <property type="term" value="C:cytoplasm"/>
    <property type="evidence" value="ECO:0007669"/>
    <property type="project" value="UniProtKB-SubCell"/>
</dbReference>
<dbReference type="GO" id="GO:0005524">
    <property type="term" value="F:ATP binding"/>
    <property type="evidence" value="ECO:0007669"/>
    <property type="project" value="UniProtKB-UniRule"/>
</dbReference>
<dbReference type="GO" id="GO:0016887">
    <property type="term" value="F:ATP hydrolysis activity"/>
    <property type="evidence" value="ECO:0007669"/>
    <property type="project" value="UniProtKB-UniRule"/>
</dbReference>
<dbReference type="GO" id="GO:0004176">
    <property type="term" value="F:ATP-dependent peptidase activity"/>
    <property type="evidence" value="ECO:0007669"/>
    <property type="project" value="UniProtKB-UniRule"/>
</dbReference>
<dbReference type="GO" id="GO:0043565">
    <property type="term" value="F:sequence-specific DNA binding"/>
    <property type="evidence" value="ECO:0007669"/>
    <property type="project" value="UniProtKB-UniRule"/>
</dbReference>
<dbReference type="GO" id="GO:0004252">
    <property type="term" value="F:serine-type endopeptidase activity"/>
    <property type="evidence" value="ECO:0007669"/>
    <property type="project" value="UniProtKB-UniRule"/>
</dbReference>
<dbReference type="GO" id="GO:0034605">
    <property type="term" value="P:cellular response to heat"/>
    <property type="evidence" value="ECO:0007669"/>
    <property type="project" value="UniProtKB-UniRule"/>
</dbReference>
<dbReference type="GO" id="GO:0006515">
    <property type="term" value="P:protein quality control for misfolded or incompletely synthesized proteins"/>
    <property type="evidence" value="ECO:0007669"/>
    <property type="project" value="UniProtKB-UniRule"/>
</dbReference>
<dbReference type="CDD" id="cd19500">
    <property type="entry name" value="RecA-like_Lon"/>
    <property type="match status" value="1"/>
</dbReference>
<dbReference type="FunFam" id="3.40.50.300:FF:000021">
    <property type="entry name" value="Lon protease homolog"/>
    <property type="match status" value="1"/>
</dbReference>
<dbReference type="Gene3D" id="1.10.8.60">
    <property type="match status" value="1"/>
</dbReference>
<dbReference type="Gene3D" id="1.20.5.5270">
    <property type="match status" value="1"/>
</dbReference>
<dbReference type="Gene3D" id="1.20.58.1480">
    <property type="match status" value="1"/>
</dbReference>
<dbReference type="Gene3D" id="3.30.230.10">
    <property type="match status" value="1"/>
</dbReference>
<dbReference type="Gene3D" id="2.30.130.40">
    <property type="entry name" value="LON domain-like"/>
    <property type="match status" value="1"/>
</dbReference>
<dbReference type="Gene3D" id="3.40.50.300">
    <property type="entry name" value="P-loop containing nucleotide triphosphate hydrolases"/>
    <property type="match status" value="1"/>
</dbReference>
<dbReference type="HAMAP" id="MF_01973">
    <property type="entry name" value="lon_bact"/>
    <property type="match status" value="1"/>
</dbReference>
<dbReference type="InterPro" id="IPR003593">
    <property type="entry name" value="AAA+_ATPase"/>
</dbReference>
<dbReference type="InterPro" id="IPR003959">
    <property type="entry name" value="ATPase_AAA_core"/>
</dbReference>
<dbReference type="InterPro" id="IPR027543">
    <property type="entry name" value="Lon_bac"/>
</dbReference>
<dbReference type="InterPro" id="IPR004815">
    <property type="entry name" value="Lon_bac/euk-typ"/>
</dbReference>
<dbReference type="InterPro" id="IPR054594">
    <property type="entry name" value="Lon_lid"/>
</dbReference>
<dbReference type="InterPro" id="IPR008269">
    <property type="entry name" value="Lon_proteolytic"/>
</dbReference>
<dbReference type="InterPro" id="IPR027065">
    <property type="entry name" value="Lon_Prtase"/>
</dbReference>
<dbReference type="InterPro" id="IPR003111">
    <property type="entry name" value="Lon_prtase_N"/>
</dbReference>
<dbReference type="InterPro" id="IPR046336">
    <property type="entry name" value="Lon_prtase_N_sf"/>
</dbReference>
<dbReference type="InterPro" id="IPR027417">
    <property type="entry name" value="P-loop_NTPase"/>
</dbReference>
<dbReference type="InterPro" id="IPR008268">
    <property type="entry name" value="Peptidase_S16_AS"/>
</dbReference>
<dbReference type="InterPro" id="IPR015947">
    <property type="entry name" value="PUA-like_sf"/>
</dbReference>
<dbReference type="InterPro" id="IPR020568">
    <property type="entry name" value="Ribosomal_Su5_D2-typ_SF"/>
</dbReference>
<dbReference type="InterPro" id="IPR014721">
    <property type="entry name" value="Ribsml_uS5_D2-typ_fold_subgr"/>
</dbReference>
<dbReference type="NCBIfam" id="TIGR00763">
    <property type="entry name" value="lon"/>
    <property type="match status" value="1"/>
</dbReference>
<dbReference type="PANTHER" id="PTHR10046">
    <property type="entry name" value="ATP DEPENDENT LON PROTEASE FAMILY MEMBER"/>
    <property type="match status" value="1"/>
</dbReference>
<dbReference type="Pfam" id="PF00004">
    <property type="entry name" value="AAA"/>
    <property type="match status" value="1"/>
</dbReference>
<dbReference type="Pfam" id="PF05362">
    <property type="entry name" value="Lon_C"/>
    <property type="match status" value="1"/>
</dbReference>
<dbReference type="Pfam" id="PF22667">
    <property type="entry name" value="Lon_lid"/>
    <property type="match status" value="1"/>
</dbReference>
<dbReference type="Pfam" id="PF02190">
    <property type="entry name" value="LON_substr_bdg"/>
    <property type="match status" value="1"/>
</dbReference>
<dbReference type="PIRSF" id="PIRSF001174">
    <property type="entry name" value="Lon_proteas"/>
    <property type="match status" value="1"/>
</dbReference>
<dbReference type="PRINTS" id="PR00830">
    <property type="entry name" value="ENDOLAPTASE"/>
</dbReference>
<dbReference type="SMART" id="SM00382">
    <property type="entry name" value="AAA"/>
    <property type="match status" value="1"/>
</dbReference>
<dbReference type="SMART" id="SM00464">
    <property type="entry name" value="LON"/>
    <property type="match status" value="1"/>
</dbReference>
<dbReference type="SUPFAM" id="SSF52540">
    <property type="entry name" value="P-loop containing nucleoside triphosphate hydrolases"/>
    <property type="match status" value="1"/>
</dbReference>
<dbReference type="SUPFAM" id="SSF88697">
    <property type="entry name" value="PUA domain-like"/>
    <property type="match status" value="1"/>
</dbReference>
<dbReference type="SUPFAM" id="SSF54211">
    <property type="entry name" value="Ribosomal protein S5 domain 2-like"/>
    <property type="match status" value="1"/>
</dbReference>
<dbReference type="PROSITE" id="PS51787">
    <property type="entry name" value="LON_N"/>
    <property type="match status" value="1"/>
</dbReference>
<dbReference type="PROSITE" id="PS51786">
    <property type="entry name" value="LON_PROTEOLYTIC"/>
    <property type="match status" value="1"/>
</dbReference>
<dbReference type="PROSITE" id="PS01046">
    <property type="entry name" value="LON_SER"/>
    <property type="match status" value="1"/>
</dbReference>
<proteinExistence type="inferred from homology"/>